<accession>Q02PT3</accession>
<sequence length="212" mass="24010">MKPYTQTTGLVAPLDRANVDTDQIIPKQFLKSIKRTGFGPNLFDEWRYLDVGQPGQNNSKRPLNPDFVLNQPRYQGASVLLARENFGCGSSREHAPWALDEYGFRTVIAPSYADIFFNNSFKNGLLPIILPEAEVDELFRQVEANEGYQLSIDLAAQTVTRPDGKVLGFEVDPFRKHCLLNGLDDIGLTLQDADAIRAFEDGYRQQQPWLFR</sequence>
<proteinExistence type="inferred from homology"/>
<protein>
    <recommendedName>
        <fullName evidence="1">3-isopropylmalate dehydratase small subunit</fullName>
        <ecNumber evidence="1">4.2.1.33</ecNumber>
    </recommendedName>
    <alternativeName>
        <fullName evidence="1">Alpha-IPM isomerase</fullName>
        <shortName evidence="1">IPMI</shortName>
    </alternativeName>
    <alternativeName>
        <fullName evidence="1">Isopropylmalate isomerase</fullName>
    </alternativeName>
</protein>
<organism>
    <name type="scientific">Pseudomonas aeruginosa (strain UCBPP-PA14)</name>
    <dbReference type="NCBI Taxonomy" id="208963"/>
    <lineage>
        <taxon>Bacteria</taxon>
        <taxon>Pseudomonadati</taxon>
        <taxon>Pseudomonadota</taxon>
        <taxon>Gammaproteobacteria</taxon>
        <taxon>Pseudomonadales</taxon>
        <taxon>Pseudomonadaceae</taxon>
        <taxon>Pseudomonas</taxon>
    </lineage>
</organism>
<evidence type="ECO:0000255" key="1">
    <source>
        <dbReference type="HAMAP-Rule" id="MF_01031"/>
    </source>
</evidence>
<gene>
    <name evidence="1" type="primary">leuD</name>
    <name type="ordered locus">PA14_23760</name>
</gene>
<name>LEUD_PSEAB</name>
<feature type="chain" id="PRO_1000063806" description="3-isopropylmalate dehydratase small subunit">
    <location>
        <begin position="1"/>
        <end position="212"/>
    </location>
</feature>
<comment type="function">
    <text evidence="1">Catalyzes the isomerization between 2-isopropylmalate and 3-isopropylmalate, via the formation of 2-isopropylmaleate.</text>
</comment>
<comment type="catalytic activity">
    <reaction evidence="1">
        <text>(2R,3S)-3-isopropylmalate = (2S)-2-isopropylmalate</text>
        <dbReference type="Rhea" id="RHEA:32287"/>
        <dbReference type="ChEBI" id="CHEBI:1178"/>
        <dbReference type="ChEBI" id="CHEBI:35121"/>
        <dbReference type="EC" id="4.2.1.33"/>
    </reaction>
</comment>
<comment type="pathway">
    <text evidence="1">Amino-acid biosynthesis; L-leucine biosynthesis; L-leucine from 3-methyl-2-oxobutanoate: step 2/4.</text>
</comment>
<comment type="subunit">
    <text evidence="1">Heterodimer of LeuC and LeuD.</text>
</comment>
<comment type="similarity">
    <text evidence="1">Belongs to the LeuD family. LeuD type 1 subfamily.</text>
</comment>
<dbReference type="EC" id="4.2.1.33" evidence="1"/>
<dbReference type="EMBL" id="CP000438">
    <property type="protein sequence ID" value="ABJ12352.1"/>
    <property type="molecule type" value="Genomic_DNA"/>
</dbReference>
<dbReference type="RefSeq" id="WP_003138498.1">
    <property type="nucleotide sequence ID" value="NZ_CP034244.1"/>
</dbReference>
<dbReference type="SMR" id="Q02PT3"/>
<dbReference type="KEGG" id="pau:PA14_23760"/>
<dbReference type="PseudoCAP" id="PA14_23760"/>
<dbReference type="HOGENOM" id="CLU_081378_0_3_6"/>
<dbReference type="BioCyc" id="PAER208963:G1G74-1982-MONOMER"/>
<dbReference type="UniPathway" id="UPA00048">
    <property type="reaction ID" value="UER00071"/>
</dbReference>
<dbReference type="Proteomes" id="UP000000653">
    <property type="component" value="Chromosome"/>
</dbReference>
<dbReference type="GO" id="GO:0009316">
    <property type="term" value="C:3-isopropylmalate dehydratase complex"/>
    <property type="evidence" value="ECO:0007669"/>
    <property type="project" value="InterPro"/>
</dbReference>
<dbReference type="GO" id="GO:0003861">
    <property type="term" value="F:3-isopropylmalate dehydratase activity"/>
    <property type="evidence" value="ECO:0007669"/>
    <property type="project" value="UniProtKB-UniRule"/>
</dbReference>
<dbReference type="GO" id="GO:0009098">
    <property type="term" value="P:L-leucine biosynthetic process"/>
    <property type="evidence" value="ECO:0007669"/>
    <property type="project" value="UniProtKB-UniRule"/>
</dbReference>
<dbReference type="CDD" id="cd01577">
    <property type="entry name" value="IPMI_Swivel"/>
    <property type="match status" value="1"/>
</dbReference>
<dbReference type="FunFam" id="3.20.19.10:FF:000003">
    <property type="entry name" value="3-isopropylmalate dehydratase small subunit"/>
    <property type="match status" value="1"/>
</dbReference>
<dbReference type="Gene3D" id="3.20.19.10">
    <property type="entry name" value="Aconitase, domain 4"/>
    <property type="match status" value="1"/>
</dbReference>
<dbReference type="HAMAP" id="MF_01031">
    <property type="entry name" value="LeuD_type1"/>
    <property type="match status" value="1"/>
</dbReference>
<dbReference type="InterPro" id="IPR004431">
    <property type="entry name" value="3-IsopropMal_deHydase_ssu"/>
</dbReference>
<dbReference type="InterPro" id="IPR015928">
    <property type="entry name" value="Aconitase/3IPM_dehydase_swvl"/>
</dbReference>
<dbReference type="InterPro" id="IPR000573">
    <property type="entry name" value="AconitaseA/IPMdHydase_ssu_swvl"/>
</dbReference>
<dbReference type="InterPro" id="IPR033940">
    <property type="entry name" value="IPMI_Swivel"/>
</dbReference>
<dbReference type="InterPro" id="IPR050075">
    <property type="entry name" value="LeuD"/>
</dbReference>
<dbReference type="NCBIfam" id="TIGR00171">
    <property type="entry name" value="leuD"/>
    <property type="match status" value="1"/>
</dbReference>
<dbReference type="NCBIfam" id="NF002458">
    <property type="entry name" value="PRK01641.1"/>
    <property type="match status" value="1"/>
</dbReference>
<dbReference type="PANTHER" id="PTHR43345:SF5">
    <property type="entry name" value="3-ISOPROPYLMALATE DEHYDRATASE SMALL SUBUNIT"/>
    <property type="match status" value="1"/>
</dbReference>
<dbReference type="PANTHER" id="PTHR43345">
    <property type="entry name" value="3-ISOPROPYLMALATE DEHYDRATASE SMALL SUBUNIT 2-RELATED-RELATED"/>
    <property type="match status" value="1"/>
</dbReference>
<dbReference type="Pfam" id="PF00694">
    <property type="entry name" value="Aconitase_C"/>
    <property type="match status" value="1"/>
</dbReference>
<dbReference type="SUPFAM" id="SSF52016">
    <property type="entry name" value="LeuD/IlvD-like"/>
    <property type="match status" value="1"/>
</dbReference>
<keyword id="KW-0028">Amino-acid biosynthesis</keyword>
<keyword id="KW-0100">Branched-chain amino acid biosynthesis</keyword>
<keyword id="KW-0432">Leucine biosynthesis</keyword>
<keyword id="KW-0456">Lyase</keyword>
<reference key="1">
    <citation type="journal article" date="2006" name="Genome Biol.">
        <title>Genomic analysis reveals that Pseudomonas aeruginosa virulence is combinatorial.</title>
        <authorList>
            <person name="Lee D.G."/>
            <person name="Urbach J.M."/>
            <person name="Wu G."/>
            <person name="Liberati N.T."/>
            <person name="Feinbaum R.L."/>
            <person name="Miyata S."/>
            <person name="Diggins L.T."/>
            <person name="He J."/>
            <person name="Saucier M."/>
            <person name="Deziel E."/>
            <person name="Friedman L."/>
            <person name="Li L."/>
            <person name="Grills G."/>
            <person name="Montgomery K."/>
            <person name="Kucherlapati R."/>
            <person name="Rahme L.G."/>
            <person name="Ausubel F.M."/>
        </authorList>
    </citation>
    <scope>NUCLEOTIDE SEQUENCE [LARGE SCALE GENOMIC DNA]</scope>
    <source>
        <strain>UCBPP-PA14</strain>
    </source>
</reference>